<evidence type="ECO:0000255" key="1">
    <source>
        <dbReference type="HAMAP-Rule" id="MF_01038"/>
    </source>
</evidence>
<comment type="function">
    <text evidence="1">Catalyzes the interconversion of 2-phosphoglycerate and 3-phosphoglycerate.</text>
</comment>
<comment type="catalytic activity">
    <reaction evidence="1">
        <text>(2R)-2-phosphoglycerate = (2R)-3-phosphoglycerate</text>
        <dbReference type="Rhea" id="RHEA:15901"/>
        <dbReference type="ChEBI" id="CHEBI:58272"/>
        <dbReference type="ChEBI" id="CHEBI:58289"/>
        <dbReference type="EC" id="5.4.2.12"/>
    </reaction>
</comment>
<comment type="cofactor">
    <cofactor evidence="1">
        <name>Mn(2+)</name>
        <dbReference type="ChEBI" id="CHEBI:29035"/>
    </cofactor>
    <text evidence="1">Binds 2 manganese ions per subunit.</text>
</comment>
<comment type="pathway">
    <text evidence="1">Carbohydrate degradation; glycolysis; pyruvate from D-glyceraldehyde 3-phosphate: step 3/5.</text>
</comment>
<comment type="subunit">
    <text evidence="1">Monomer.</text>
</comment>
<comment type="similarity">
    <text evidence="1">Belongs to the BPG-independent phosphoglycerate mutase family.</text>
</comment>
<feature type="chain" id="PRO_0000212195" description="2,3-bisphosphoglycerate-independent phosphoglycerate mutase">
    <location>
        <begin position="1"/>
        <end position="543"/>
    </location>
</feature>
<feature type="active site" description="Phosphoserine intermediate" evidence="1">
    <location>
        <position position="73"/>
    </location>
</feature>
<feature type="binding site" evidence="1">
    <location>
        <position position="20"/>
    </location>
    <ligand>
        <name>Mn(2+)</name>
        <dbReference type="ChEBI" id="CHEBI:29035"/>
        <label>2</label>
    </ligand>
</feature>
<feature type="binding site" evidence="1">
    <location>
        <position position="73"/>
    </location>
    <ligand>
        <name>Mn(2+)</name>
        <dbReference type="ChEBI" id="CHEBI:29035"/>
        <label>2</label>
    </ligand>
</feature>
<feature type="binding site" evidence="1">
    <location>
        <position position="134"/>
    </location>
    <ligand>
        <name>substrate</name>
    </ligand>
</feature>
<feature type="binding site" evidence="1">
    <location>
        <begin position="166"/>
        <end position="167"/>
    </location>
    <ligand>
        <name>substrate</name>
    </ligand>
</feature>
<feature type="binding site" evidence="1">
    <location>
        <position position="198"/>
    </location>
    <ligand>
        <name>substrate</name>
    </ligand>
</feature>
<feature type="binding site" evidence="1">
    <location>
        <position position="204"/>
    </location>
    <ligand>
        <name>substrate</name>
    </ligand>
</feature>
<feature type="binding site" evidence="1">
    <location>
        <begin position="278"/>
        <end position="281"/>
    </location>
    <ligand>
        <name>substrate</name>
    </ligand>
</feature>
<feature type="binding site" evidence="1">
    <location>
        <position position="360"/>
    </location>
    <ligand>
        <name>substrate</name>
    </ligand>
</feature>
<feature type="binding site" evidence="1">
    <location>
        <position position="428"/>
    </location>
    <ligand>
        <name>Mn(2+)</name>
        <dbReference type="ChEBI" id="CHEBI:29035"/>
        <label>1</label>
    </ligand>
</feature>
<feature type="binding site" evidence="1">
    <location>
        <position position="432"/>
    </location>
    <ligand>
        <name>Mn(2+)</name>
        <dbReference type="ChEBI" id="CHEBI:29035"/>
        <label>1</label>
    </ligand>
</feature>
<feature type="binding site" evidence="1">
    <location>
        <position position="469"/>
    </location>
    <ligand>
        <name>Mn(2+)</name>
        <dbReference type="ChEBI" id="CHEBI:29035"/>
        <label>2</label>
    </ligand>
</feature>
<feature type="binding site" evidence="1">
    <location>
        <position position="470"/>
    </location>
    <ligand>
        <name>Mn(2+)</name>
        <dbReference type="ChEBI" id="CHEBI:29035"/>
        <label>2</label>
    </ligand>
</feature>
<feature type="binding site" evidence="1">
    <location>
        <position position="488"/>
    </location>
    <ligand>
        <name>Mn(2+)</name>
        <dbReference type="ChEBI" id="CHEBI:29035"/>
        <label>1</label>
    </ligand>
</feature>
<accession>Q7UFG7</accession>
<reference key="1">
    <citation type="journal article" date="2003" name="Proc. Natl. Acad. Sci. U.S.A.">
        <title>Complete genome sequence of the marine planctomycete Pirellula sp. strain 1.</title>
        <authorList>
            <person name="Gloeckner F.O."/>
            <person name="Kube M."/>
            <person name="Bauer M."/>
            <person name="Teeling H."/>
            <person name="Lombardot T."/>
            <person name="Ludwig W."/>
            <person name="Gade D."/>
            <person name="Beck A."/>
            <person name="Borzym K."/>
            <person name="Heitmann K."/>
            <person name="Rabus R."/>
            <person name="Schlesner H."/>
            <person name="Amann R."/>
            <person name="Reinhardt R."/>
        </authorList>
    </citation>
    <scope>NUCLEOTIDE SEQUENCE [LARGE SCALE GENOMIC DNA]</scope>
    <source>
        <strain>DSM 10527 / NCIMB 13988 / SH1</strain>
    </source>
</reference>
<proteinExistence type="inferred from homology"/>
<gene>
    <name evidence="1" type="primary">gpmI</name>
    <name type="synonym">pgm</name>
    <name type="ordered locus">RB8562</name>
</gene>
<dbReference type="EC" id="5.4.2.12" evidence="1"/>
<dbReference type="EMBL" id="BX294147">
    <property type="protein sequence ID" value="CAD78715.1"/>
    <property type="molecule type" value="Genomic_DNA"/>
</dbReference>
<dbReference type="RefSeq" id="NP_868437.1">
    <property type="nucleotide sequence ID" value="NC_005027.1"/>
</dbReference>
<dbReference type="RefSeq" id="WP_011121922.1">
    <property type="nucleotide sequence ID" value="NC_005027.1"/>
</dbReference>
<dbReference type="SMR" id="Q7UFG7"/>
<dbReference type="FunCoup" id="Q7UFG7">
    <property type="interactions" value="390"/>
</dbReference>
<dbReference type="STRING" id="243090.RB8562"/>
<dbReference type="EnsemblBacteria" id="CAD78715">
    <property type="protein sequence ID" value="CAD78715"/>
    <property type="gene ID" value="RB8562"/>
</dbReference>
<dbReference type="KEGG" id="rba:RB8562"/>
<dbReference type="PATRIC" id="fig|243090.15.peg.4115"/>
<dbReference type="eggNOG" id="COG0696">
    <property type="taxonomic scope" value="Bacteria"/>
</dbReference>
<dbReference type="HOGENOM" id="CLU_026099_2_0_0"/>
<dbReference type="InParanoid" id="Q7UFG7"/>
<dbReference type="OrthoDB" id="9800863at2"/>
<dbReference type="UniPathway" id="UPA00109">
    <property type="reaction ID" value="UER00186"/>
</dbReference>
<dbReference type="Proteomes" id="UP000001025">
    <property type="component" value="Chromosome"/>
</dbReference>
<dbReference type="GO" id="GO:0005829">
    <property type="term" value="C:cytosol"/>
    <property type="evidence" value="ECO:0000318"/>
    <property type="project" value="GO_Central"/>
</dbReference>
<dbReference type="GO" id="GO:0030145">
    <property type="term" value="F:manganese ion binding"/>
    <property type="evidence" value="ECO:0000318"/>
    <property type="project" value="GO_Central"/>
</dbReference>
<dbReference type="GO" id="GO:0004619">
    <property type="term" value="F:phosphoglycerate mutase activity"/>
    <property type="evidence" value="ECO:0000318"/>
    <property type="project" value="GO_Central"/>
</dbReference>
<dbReference type="GO" id="GO:0005975">
    <property type="term" value="P:carbohydrate metabolic process"/>
    <property type="evidence" value="ECO:0000318"/>
    <property type="project" value="GO_Central"/>
</dbReference>
<dbReference type="GO" id="GO:0006007">
    <property type="term" value="P:glucose catabolic process"/>
    <property type="evidence" value="ECO:0007669"/>
    <property type="project" value="InterPro"/>
</dbReference>
<dbReference type="GO" id="GO:0006096">
    <property type="term" value="P:glycolytic process"/>
    <property type="evidence" value="ECO:0007669"/>
    <property type="project" value="UniProtKB-UniRule"/>
</dbReference>
<dbReference type="CDD" id="cd16010">
    <property type="entry name" value="iPGM"/>
    <property type="match status" value="1"/>
</dbReference>
<dbReference type="FunFam" id="3.40.1450.10:FF:000002">
    <property type="entry name" value="2,3-bisphosphoglycerate-independent phosphoglycerate mutase"/>
    <property type="match status" value="1"/>
</dbReference>
<dbReference type="Gene3D" id="3.40.720.10">
    <property type="entry name" value="Alkaline Phosphatase, subunit A"/>
    <property type="match status" value="1"/>
</dbReference>
<dbReference type="Gene3D" id="3.40.1450.10">
    <property type="entry name" value="BPG-independent phosphoglycerate mutase, domain B"/>
    <property type="match status" value="1"/>
</dbReference>
<dbReference type="HAMAP" id="MF_01038">
    <property type="entry name" value="GpmI"/>
    <property type="match status" value="1"/>
</dbReference>
<dbReference type="InterPro" id="IPR017850">
    <property type="entry name" value="Alkaline_phosphatase_core_sf"/>
</dbReference>
<dbReference type="InterPro" id="IPR011258">
    <property type="entry name" value="BPG-indep_PGM_N"/>
</dbReference>
<dbReference type="InterPro" id="IPR006124">
    <property type="entry name" value="Metalloenzyme"/>
</dbReference>
<dbReference type="InterPro" id="IPR036646">
    <property type="entry name" value="PGAM_B_sf"/>
</dbReference>
<dbReference type="InterPro" id="IPR005995">
    <property type="entry name" value="Pgm_bpd_ind"/>
</dbReference>
<dbReference type="NCBIfam" id="TIGR01307">
    <property type="entry name" value="pgm_bpd_ind"/>
    <property type="match status" value="1"/>
</dbReference>
<dbReference type="PANTHER" id="PTHR31637">
    <property type="entry name" value="2,3-BISPHOSPHOGLYCERATE-INDEPENDENT PHOSPHOGLYCERATE MUTASE"/>
    <property type="match status" value="1"/>
</dbReference>
<dbReference type="PANTHER" id="PTHR31637:SF0">
    <property type="entry name" value="2,3-BISPHOSPHOGLYCERATE-INDEPENDENT PHOSPHOGLYCERATE MUTASE"/>
    <property type="match status" value="1"/>
</dbReference>
<dbReference type="Pfam" id="PF06415">
    <property type="entry name" value="iPGM_N"/>
    <property type="match status" value="1"/>
</dbReference>
<dbReference type="Pfam" id="PF01676">
    <property type="entry name" value="Metalloenzyme"/>
    <property type="match status" value="1"/>
</dbReference>
<dbReference type="PIRSF" id="PIRSF001492">
    <property type="entry name" value="IPGAM"/>
    <property type="match status" value="1"/>
</dbReference>
<dbReference type="SUPFAM" id="SSF64158">
    <property type="entry name" value="2,3-Bisphosphoglycerate-independent phosphoglycerate mutase, substrate-binding domain"/>
    <property type="match status" value="1"/>
</dbReference>
<dbReference type="SUPFAM" id="SSF53649">
    <property type="entry name" value="Alkaline phosphatase-like"/>
    <property type="match status" value="1"/>
</dbReference>
<protein>
    <recommendedName>
        <fullName evidence="1">2,3-bisphosphoglycerate-independent phosphoglycerate mutase</fullName>
        <shortName evidence="1">BPG-independent PGAM</shortName>
        <shortName evidence="1">Phosphoglyceromutase</shortName>
        <shortName evidence="1">iPGM</shortName>
        <ecNumber evidence="1">5.4.2.12</ecNumber>
    </recommendedName>
</protein>
<name>GPMI_RHOBA</name>
<keyword id="KW-0324">Glycolysis</keyword>
<keyword id="KW-0413">Isomerase</keyword>
<keyword id="KW-0464">Manganese</keyword>
<keyword id="KW-0479">Metal-binding</keyword>
<keyword id="KW-1185">Reference proteome</keyword>
<organism>
    <name type="scientific">Rhodopirellula baltica (strain DSM 10527 / NCIMB 13988 / SH1)</name>
    <dbReference type="NCBI Taxonomy" id="243090"/>
    <lineage>
        <taxon>Bacteria</taxon>
        <taxon>Pseudomonadati</taxon>
        <taxon>Planctomycetota</taxon>
        <taxon>Planctomycetia</taxon>
        <taxon>Pirellulales</taxon>
        <taxon>Pirellulaceae</taxon>
        <taxon>Rhodopirellula</taxon>
    </lineage>
</organism>
<sequence>MVLTFMTATRRRPVVLIVRDGWGQNPDPKWNESNAVHLANTPVDDKLTQEYPSVLIHTSGEDVGLPAGVMGNSEVGHQNIGAGRIVDQEVMRITRAIRDDSFFSNPVVTGAIDHVKKSGGRLHLLGLMSDGRVHSDLQHGIAVIDLAKRNGLTGDQLAIHAITDGRDTSPRGGLKFVSQLTDHCEASGVGVVASVIGRFYAMDRDLRWERVEAAYNLMTQGTGQTFPSASAAIESYYANPTESSRDGDEFITASSIVPEGGSPITVQPGDAVLFMNYRGDRTREITKAFTFDDAAWKDIPGGGFDRGKKIDNLYFATMTGYETGLPVKVIFEKPAKMPNILGEYVASKGLHQFRCAETEKYPHVTFFFNDYRDNPFEEEEWGMAPSPRDVSTYDQKPEMSAEDITEKVLKQIKSGKCDMIIVNYANGDMVGHTGVLEAAIKAVEKVDACVGRVVDATLAAGGSLVVTADHGNCEQMIDPETGGPHTAHTTYQVPLIVVDPEFVGKPLREGGRLADIAPTVLALMGLEVPPEMTGRPLMETQTA</sequence>